<keyword id="KW-0067">ATP-binding</keyword>
<keyword id="KW-0156">Chromatin regulator</keyword>
<keyword id="KW-0158">Chromosome</keyword>
<keyword id="KW-0227">DNA damage</keyword>
<keyword id="KW-0418">Kinase</keyword>
<keyword id="KW-0547">Nucleotide-binding</keyword>
<keyword id="KW-0539">Nucleus</keyword>
<keyword id="KW-1185">Reference proteome</keyword>
<keyword id="KW-0723">Serine/threonine-protein kinase</keyword>
<keyword id="KW-0779">Telomere</keyword>
<keyword id="KW-0808">Transferase</keyword>
<dbReference type="EC" id="2.7.11.1"/>
<dbReference type="EMBL" id="CR382130">
    <property type="protein sequence ID" value="CAG80568.1"/>
    <property type="molecule type" value="Genomic_DNA"/>
</dbReference>
<dbReference type="RefSeq" id="XP_502380.1">
    <property type="nucleotide sequence ID" value="XM_502380.1"/>
</dbReference>
<dbReference type="SMR" id="Q6CAD2"/>
<dbReference type="STRING" id="284591.Q6CAD2"/>
<dbReference type="EnsemblFungi" id="CAG80568">
    <property type="protein sequence ID" value="CAG80568"/>
    <property type="gene ID" value="YALI0_D03888g"/>
</dbReference>
<dbReference type="VEuPathDB" id="FungiDB:YALI0_D03888g"/>
<dbReference type="HOGENOM" id="CLU_230347_0_0_1"/>
<dbReference type="InParanoid" id="Q6CAD2"/>
<dbReference type="OrthoDB" id="1573at4891"/>
<dbReference type="Proteomes" id="UP000001300">
    <property type="component" value="Chromosome D"/>
</dbReference>
<dbReference type="GO" id="GO:0005694">
    <property type="term" value="C:chromosome"/>
    <property type="evidence" value="ECO:0000318"/>
    <property type="project" value="GO_Central"/>
</dbReference>
<dbReference type="GO" id="GO:0000781">
    <property type="term" value="C:chromosome, telomeric region"/>
    <property type="evidence" value="ECO:0007669"/>
    <property type="project" value="UniProtKB-SubCell"/>
</dbReference>
<dbReference type="GO" id="GO:0005634">
    <property type="term" value="C:nucleus"/>
    <property type="evidence" value="ECO:0000318"/>
    <property type="project" value="GO_Central"/>
</dbReference>
<dbReference type="GO" id="GO:0005524">
    <property type="term" value="F:ATP binding"/>
    <property type="evidence" value="ECO:0007669"/>
    <property type="project" value="UniProtKB-KW"/>
</dbReference>
<dbReference type="GO" id="GO:0106310">
    <property type="term" value="F:protein serine kinase activity"/>
    <property type="evidence" value="ECO:0007669"/>
    <property type="project" value="RHEA"/>
</dbReference>
<dbReference type="GO" id="GO:0004674">
    <property type="term" value="F:protein serine/threonine kinase activity"/>
    <property type="evidence" value="ECO:0000318"/>
    <property type="project" value="GO_Central"/>
</dbReference>
<dbReference type="GO" id="GO:0006325">
    <property type="term" value="P:chromatin organization"/>
    <property type="evidence" value="ECO:0007669"/>
    <property type="project" value="UniProtKB-KW"/>
</dbReference>
<dbReference type="GO" id="GO:0000077">
    <property type="term" value="P:DNA damage checkpoint signaling"/>
    <property type="evidence" value="ECO:0000318"/>
    <property type="project" value="GO_Central"/>
</dbReference>
<dbReference type="GO" id="GO:0006302">
    <property type="term" value="P:double-strand break repair"/>
    <property type="evidence" value="ECO:0000318"/>
    <property type="project" value="GO_Central"/>
</dbReference>
<dbReference type="GO" id="GO:0000723">
    <property type="term" value="P:telomere maintenance"/>
    <property type="evidence" value="ECO:0000318"/>
    <property type="project" value="GO_Central"/>
</dbReference>
<dbReference type="CDD" id="cd05171">
    <property type="entry name" value="PIKKc_ATM"/>
    <property type="match status" value="1"/>
</dbReference>
<dbReference type="FunFam" id="3.30.1010.10:FF:000032">
    <property type="entry name" value="Serine/threonine-protein kinase TEL1"/>
    <property type="match status" value="1"/>
</dbReference>
<dbReference type="Gene3D" id="1.10.1070.11">
    <property type="entry name" value="Phosphatidylinositol 3-/4-kinase, catalytic domain"/>
    <property type="match status" value="1"/>
</dbReference>
<dbReference type="Gene3D" id="3.30.1010.10">
    <property type="entry name" value="Phosphatidylinositol 3-kinase Catalytic Subunit, Chain A, domain 4"/>
    <property type="match status" value="1"/>
</dbReference>
<dbReference type="InterPro" id="IPR038980">
    <property type="entry name" value="ATM_plant"/>
</dbReference>
<dbReference type="InterPro" id="IPR003152">
    <property type="entry name" value="FATC_dom"/>
</dbReference>
<dbReference type="InterPro" id="IPR011009">
    <property type="entry name" value="Kinase-like_dom_sf"/>
</dbReference>
<dbReference type="InterPro" id="IPR000403">
    <property type="entry name" value="PI3/4_kinase_cat_dom"/>
</dbReference>
<dbReference type="InterPro" id="IPR036940">
    <property type="entry name" value="PI3/4_kinase_cat_sf"/>
</dbReference>
<dbReference type="InterPro" id="IPR018936">
    <property type="entry name" value="PI3/4_kinase_CS"/>
</dbReference>
<dbReference type="InterPro" id="IPR014009">
    <property type="entry name" value="PIK_FAT"/>
</dbReference>
<dbReference type="InterPro" id="IPR044107">
    <property type="entry name" value="PIKKc_ATM"/>
</dbReference>
<dbReference type="PANTHER" id="PTHR37079">
    <property type="entry name" value="SERINE/THREONINE-PROTEIN KINASE ATM"/>
    <property type="match status" value="1"/>
</dbReference>
<dbReference type="PANTHER" id="PTHR37079:SF4">
    <property type="entry name" value="SERINE_THREONINE-PROTEIN KINASE ATM"/>
    <property type="match status" value="1"/>
</dbReference>
<dbReference type="Pfam" id="PF02260">
    <property type="entry name" value="FATC"/>
    <property type="match status" value="1"/>
</dbReference>
<dbReference type="Pfam" id="PF00454">
    <property type="entry name" value="PI3_PI4_kinase"/>
    <property type="match status" value="1"/>
</dbReference>
<dbReference type="SMART" id="SM01343">
    <property type="entry name" value="FATC"/>
    <property type="match status" value="1"/>
</dbReference>
<dbReference type="SMART" id="SM00146">
    <property type="entry name" value="PI3Kc"/>
    <property type="match status" value="1"/>
</dbReference>
<dbReference type="SUPFAM" id="SSF56112">
    <property type="entry name" value="Protein kinase-like (PK-like)"/>
    <property type="match status" value="1"/>
</dbReference>
<dbReference type="PROSITE" id="PS51189">
    <property type="entry name" value="FAT"/>
    <property type="match status" value="1"/>
</dbReference>
<dbReference type="PROSITE" id="PS51190">
    <property type="entry name" value="FATC"/>
    <property type="match status" value="1"/>
</dbReference>
<dbReference type="PROSITE" id="PS00915">
    <property type="entry name" value="PI3_4_KINASE_1"/>
    <property type="match status" value="1"/>
</dbReference>
<dbReference type="PROSITE" id="PS00916">
    <property type="entry name" value="PI3_4_KINASE_2"/>
    <property type="match status" value="1"/>
</dbReference>
<dbReference type="PROSITE" id="PS50290">
    <property type="entry name" value="PI3_4_KINASE_3"/>
    <property type="match status" value="1"/>
</dbReference>
<name>ATM_YARLI</name>
<feature type="chain" id="PRO_0000227707" description="Serine/threonine-protein kinase TEL1">
    <location>
        <begin position="1"/>
        <end position="2282"/>
    </location>
</feature>
<feature type="domain" description="FAT" evidence="3">
    <location>
        <begin position="1325"/>
        <end position="1844"/>
    </location>
</feature>
<feature type="domain" description="PI3K/PI4K catalytic" evidence="2">
    <location>
        <begin position="1939"/>
        <end position="2250"/>
    </location>
</feature>
<feature type="domain" description="FATC" evidence="3 4">
    <location>
        <begin position="2250"/>
        <end position="2282"/>
    </location>
</feature>
<feature type="region of interest" description="G-loop" evidence="2">
    <location>
        <begin position="1945"/>
        <end position="1951"/>
    </location>
</feature>
<feature type="region of interest" description="Catalytic loop" evidence="2">
    <location>
        <begin position="2115"/>
        <end position="2123"/>
    </location>
</feature>
<feature type="region of interest" description="Activation loop" evidence="2">
    <location>
        <begin position="2135"/>
        <end position="2159"/>
    </location>
</feature>
<accession>Q6CAD2</accession>
<sequence length="2282" mass="256251">MVIRGVCDSISRDIASSAVTGKRHTTQMSIFKTIARGHGRFKARSSRQFIVSTVCELLLARHKDRGSQLIVASNLRLVLSHKPHLEHLLWDHYRRSVACLCRELSALCVNSMEESGLEMLIQELLLCLDLLTKPKYVGMAELKHDLWNCIDSMLYKYKEVSEMHVLILSISVSLFQVVFGSDYEICHEMVPSIFAIGTKLFTSKSKAVREISLRFLLKMEIYLASIFGKTCPVPLDQDRLNQIEDHMVELLQVLKNEYNSSSLQDNDVVFEDEIVLVNSKKTMQFLICKLIAMLEYVLSYTLTDGNVKQEEDLHGPRKKPRVSISPETPTLNAISAQIQAFQASKPISEVDKPLASLLSSISGSLDKTTRWKFFSAAKLLAQSPPLSPKNAHDVVFLTKWWTEGVAKLRTRSEDSACVLLTTILRQHSSALDPKLVVSLASNAESKGPLKYSNVSLEFVTCASQFLISHKACSQSQWSDWLFVVLASEQIGATSSKMMLDTAGLLLASVGCLIRMIETPQNTLETTTSSIMWKTDFKTTSSTSGDIELTECMPSITIRDLKSGFQNYLNELGDWCESASIDVNVVLPSTVFALVVCAVLDRQGTPVGLNSRISDFLAVVTKRVEGGSCDSHVFFEAITLINRLRHYNLLGDSLCILWDSFINGIEKLLNVSQVTENEFDPDSPSGKNIMPDLRLSLLLRGPLKSEPFLLAIFPSDIKQYASCDPGKRLPELFRYVGQTLLSSYLWDCSPLAKQLVVDLLDVYFKSGMTESSDADDLQRWVSRDKFLVGPQLLYGLMQVSTPSEYLNLYSSVAICAAERVSSQDSYHCMDATLTRMSSAKSKSRLVVEEMIVALLSVHRECLSLLPVVIERVKTDMLRQKLDTDSESLVRFCKQTGTDSILDKILSVKVGSCVFEEEGHFSTQQLLCSEDSLQWNTQGPPLDILSRTWPDYSPCTLLMLVRGLLNLMLKPRVSFEVPLRLVQLKYVLCLFPKRDLCSPDNYVLQQMVSCLISFLSHSTVGASVRHLLSELFEVIKLPHLEGYIADLGEQSFFGADVSQLLYLLHPSEPHLCKYIEWVNSGFSDPEAFLSVFLHTEISDKLKATLLKSLDFGVTNMTLLGLMDIVCTKETVSFIKRASKLYSFDWEESRVLSLLLGRGYLLFGESSNSAPKTNTETSFWNALTSEFLTLLRGSDFTAKFAVEVCLSKIVTKVQVQVPAELQHVFDSGVLEYTHTDEPTTGWVQKTTLELLGLLGGDFELLIPLVRTLSSTSPLLPFIFKWTCLEYCRQGEPSYLSQILSQNSSLVVIETFFFVNSFTAHRTLNWQPEIVNSALTLHLYTEALYFLEADKACWASQEIQPSYYDIYQNIDDPDLFYGLKFTPCLESALKQLNHENQNLTCFEYESGLFDWSVETGGGESKTDILSHLSTSGMNGLAYTINSDDVYRWKLGLLEDPILETGTDDQTVLSQLRSIVVDEKPVLKSTLSDKYLGMQYLLYQMQLDANSDYLDRIQPPDGVLDILQFCASAWRTIKTETASYNGILTLSKLGAVSRELNNAQISKNCAVSLQELSRTASHISGNVCAISIASCLWSEAAVSRTTPVEMLKRMLGSINPGQSPVLASQFCQATVLLTDWSSQARMMSPEKIHRLYIAGASEYMALIPAGNPKTRMFHVFAKFCETQLHSQNYDEQIHNAVMDIERLEGELANLSRISMTREIKHAQRISRKSLDRAKESKLNYERLKAMFLDSAVQFYLLSCAVRDSEYHEDVTRLISLWFGNSHVNFVNERMQDYALIPSFKLAPLINQLSSKLSYEPNNYFQTLLLDLVSATCKAHPFHCLYQISSLMRTDASPQTERRIQAAVKVWNTVKTQEKTICRAMEIFTDKCVELANAEWPGKGQKASINQFPNGSWWQNGLRKLNIPPPTAQIPLSLDYTDIPSMNKVLAQVIKAGGISHPKIMDFQLSDGSVSKALLKGGKDDMRQDAIMEQVFCRVNQYFLGDPETRKRGLSIRTYNVVPMGPRAGMIEFVANTESLQAALVPLHEKDDWDYLTGRTKMSAVAKESNSRRVEVLEEIYTHVTPVMSQYFFQNFRSSAQAWFKARTNYVRSAAASSMLGYILGIGDRHCNNIMIDYKTGQLVHIDLGISFDQGKNLTVPEKVPFRLTRDMVDAMGSVGVDGPFRRCCELSLGLFREQQDNILSILNVLRYDPLYSWTMSPKKKQTRSSSGSDLSDIKLEESNVTADMCLSGVKGKLAVRLSTEAVVRELIGEAVSVENLAVIFHGWTPFY</sequence>
<organism>
    <name type="scientific">Yarrowia lipolytica (strain CLIB 122 / E 150)</name>
    <name type="common">Yeast</name>
    <name type="synonym">Candida lipolytica</name>
    <dbReference type="NCBI Taxonomy" id="284591"/>
    <lineage>
        <taxon>Eukaryota</taxon>
        <taxon>Fungi</taxon>
        <taxon>Dikarya</taxon>
        <taxon>Ascomycota</taxon>
        <taxon>Saccharomycotina</taxon>
        <taxon>Dipodascomycetes</taxon>
        <taxon>Dipodascales</taxon>
        <taxon>Dipodascales incertae sedis</taxon>
        <taxon>Yarrowia</taxon>
    </lineage>
</organism>
<reference key="1">
    <citation type="journal article" date="2004" name="Nature">
        <title>Genome evolution in yeasts.</title>
        <authorList>
            <person name="Dujon B."/>
            <person name="Sherman D."/>
            <person name="Fischer G."/>
            <person name="Durrens P."/>
            <person name="Casaregola S."/>
            <person name="Lafontaine I."/>
            <person name="de Montigny J."/>
            <person name="Marck C."/>
            <person name="Neuveglise C."/>
            <person name="Talla E."/>
            <person name="Goffard N."/>
            <person name="Frangeul L."/>
            <person name="Aigle M."/>
            <person name="Anthouard V."/>
            <person name="Babour A."/>
            <person name="Barbe V."/>
            <person name="Barnay S."/>
            <person name="Blanchin S."/>
            <person name="Beckerich J.-M."/>
            <person name="Beyne E."/>
            <person name="Bleykasten C."/>
            <person name="Boisrame A."/>
            <person name="Boyer J."/>
            <person name="Cattolico L."/>
            <person name="Confanioleri F."/>
            <person name="de Daruvar A."/>
            <person name="Despons L."/>
            <person name="Fabre E."/>
            <person name="Fairhead C."/>
            <person name="Ferry-Dumazet H."/>
            <person name="Groppi A."/>
            <person name="Hantraye F."/>
            <person name="Hennequin C."/>
            <person name="Jauniaux N."/>
            <person name="Joyet P."/>
            <person name="Kachouri R."/>
            <person name="Kerrest A."/>
            <person name="Koszul R."/>
            <person name="Lemaire M."/>
            <person name="Lesur I."/>
            <person name="Ma L."/>
            <person name="Muller H."/>
            <person name="Nicaud J.-M."/>
            <person name="Nikolski M."/>
            <person name="Oztas S."/>
            <person name="Ozier-Kalogeropoulos O."/>
            <person name="Pellenz S."/>
            <person name="Potier S."/>
            <person name="Richard G.-F."/>
            <person name="Straub M.-L."/>
            <person name="Suleau A."/>
            <person name="Swennen D."/>
            <person name="Tekaia F."/>
            <person name="Wesolowski-Louvel M."/>
            <person name="Westhof E."/>
            <person name="Wirth B."/>
            <person name="Zeniou-Meyer M."/>
            <person name="Zivanovic Y."/>
            <person name="Bolotin-Fukuhara M."/>
            <person name="Thierry A."/>
            <person name="Bouchier C."/>
            <person name="Caudron B."/>
            <person name="Scarpelli C."/>
            <person name="Gaillardin C."/>
            <person name="Weissenbach J."/>
            <person name="Wincker P."/>
            <person name="Souciet J.-L."/>
        </authorList>
    </citation>
    <scope>NUCLEOTIDE SEQUENCE [LARGE SCALE GENOMIC DNA]</scope>
    <source>
        <strain>CLIB 122 / E 150</strain>
    </source>
</reference>
<gene>
    <name type="primary">TEL1</name>
    <name type="ordered locus">YALI0D03888g</name>
</gene>
<evidence type="ECO:0000250" key="1"/>
<evidence type="ECO:0000255" key="2">
    <source>
        <dbReference type="PROSITE-ProRule" id="PRU00269"/>
    </source>
</evidence>
<evidence type="ECO:0000255" key="3">
    <source>
        <dbReference type="PROSITE-ProRule" id="PRU00534"/>
    </source>
</evidence>
<evidence type="ECO:0000255" key="4">
    <source>
        <dbReference type="PROSITE-ProRule" id="PRU00535"/>
    </source>
</evidence>
<evidence type="ECO:0000305" key="5"/>
<comment type="function">
    <text evidence="1">Serine/threonine protein kinase which activates checkpoint signaling upon genotoxic stresses such as ionizing radiation (IR), ultraviolet light (UV), or DNA replication stalling, thereby acting as a DNA damage sensor. Recognizes the substrate consensus sequence [ST]-Q. Phosphorylates histone H2A to form H2AS128ph (gamma-H2A) at sites of DNA damage, involved in the regulation of DNA damage response mechanism. Required for the control of telomere length and genome stability (By similarity).</text>
</comment>
<comment type="catalytic activity">
    <reaction>
        <text>L-seryl-[protein] + ATP = O-phospho-L-seryl-[protein] + ADP + H(+)</text>
        <dbReference type="Rhea" id="RHEA:17989"/>
        <dbReference type="Rhea" id="RHEA-COMP:9863"/>
        <dbReference type="Rhea" id="RHEA-COMP:11604"/>
        <dbReference type="ChEBI" id="CHEBI:15378"/>
        <dbReference type="ChEBI" id="CHEBI:29999"/>
        <dbReference type="ChEBI" id="CHEBI:30616"/>
        <dbReference type="ChEBI" id="CHEBI:83421"/>
        <dbReference type="ChEBI" id="CHEBI:456216"/>
        <dbReference type="EC" id="2.7.11.1"/>
    </reaction>
</comment>
<comment type="catalytic activity">
    <reaction>
        <text>L-threonyl-[protein] + ATP = O-phospho-L-threonyl-[protein] + ADP + H(+)</text>
        <dbReference type="Rhea" id="RHEA:46608"/>
        <dbReference type="Rhea" id="RHEA-COMP:11060"/>
        <dbReference type="Rhea" id="RHEA-COMP:11605"/>
        <dbReference type="ChEBI" id="CHEBI:15378"/>
        <dbReference type="ChEBI" id="CHEBI:30013"/>
        <dbReference type="ChEBI" id="CHEBI:30616"/>
        <dbReference type="ChEBI" id="CHEBI:61977"/>
        <dbReference type="ChEBI" id="CHEBI:456216"/>
        <dbReference type="EC" id="2.7.11.1"/>
    </reaction>
</comment>
<comment type="subunit">
    <text evidence="1">Associates with DNA double-strand breaks.</text>
</comment>
<comment type="subcellular location">
    <subcellularLocation>
        <location evidence="1">Nucleus</location>
    </subcellularLocation>
    <subcellularLocation>
        <location evidence="1">Chromosome</location>
        <location evidence="1">Telomere</location>
    </subcellularLocation>
    <text evidence="1">Localizes to nuclear DNA repair foci with other DNA repair proteins in response to DNA double strand breaks.</text>
</comment>
<comment type="similarity">
    <text evidence="5">Belongs to the PI3/PI4-kinase family. ATM subfamily.</text>
</comment>
<proteinExistence type="inferred from homology"/>
<protein>
    <recommendedName>
        <fullName>Serine/threonine-protein kinase TEL1</fullName>
        <ecNumber>2.7.11.1</ecNumber>
    </recommendedName>
    <alternativeName>
        <fullName>ATM homolog</fullName>
    </alternativeName>
    <alternativeName>
        <fullName>DNA-damage checkpoint kinase TEL1</fullName>
    </alternativeName>
    <alternativeName>
        <fullName>Telomere length regulation protein 1</fullName>
    </alternativeName>
</protein>